<evidence type="ECO:0000255" key="1">
    <source>
        <dbReference type="HAMAP-Rule" id="MF_00480"/>
    </source>
</evidence>
<evidence type="ECO:0000305" key="2"/>
<keyword id="KW-0687">Ribonucleoprotein</keyword>
<keyword id="KW-0689">Ribosomal protein</keyword>
<keyword id="KW-0694">RNA-binding</keyword>
<keyword id="KW-0699">rRNA-binding</keyword>
<keyword id="KW-0820">tRNA-binding</keyword>
<gene>
    <name evidence="1" type="primary">rpsG</name>
    <name type="ordered locus">KPN78578_36890</name>
    <name type="ORF">KPN_03726</name>
</gene>
<accession>A6TEX9</accession>
<proteinExistence type="inferred from homology"/>
<protein>
    <recommendedName>
        <fullName evidence="1">Small ribosomal subunit protein uS7</fullName>
    </recommendedName>
    <alternativeName>
        <fullName evidence="2">30S ribosomal protein S7</fullName>
    </alternativeName>
</protein>
<sequence>MPRRRVIGQRKILPDPKFGSELLAKFVNILMVDGKKSTAETIVYSALETLAQRSGKTELEAFEVALENVRPTVEVKSRRVGGSTYQVPVEVRPVRRNALAMRWIVEAARKRGDKSMALRLANELTDAADNKGTAVKKREDVHRMAEANKAFAHYRW</sequence>
<dbReference type="EMBL" id="CP000647">
    <property type="protein sequence ID" value="ABR79113.1"/>
    <property type="molecule type" value="Genomic_DNA"/>
</dbReference>
<dbReference type="RefSeq" id="WP_015369416.1">
    <property type="nucleotide sequence ID" value="NC_009648.1"/>
</dbReference>
<dbReference type="SMR" id="A6TEX9"/>
<dbReference type="STRING" id="272620.KPN_03726"/>
<dbReference type="jPOST" id="A6TEX9"/>
<dbReference type="PaxDb" id="272620-KPN_03726"/>
<dbReference type="EnsemblBacteria" id="ABR79113">
    <property type="protein sequence ID" value="ABR79113"/>
    <property type="gene ID" value="KPN_03726"/>
</dbReference>
<dbReference type="GeneID" id="93314130"/>
<dbReference type="KEGG" id="kpn:KPN_03726"/>
<dbReference type="HOGENOM" id="CLU_072226_1_1_6"/>
<dbReference type="Proteomes" id="UP000000265">
    <property type="component" value="Chromosome"/>
</dbReference>
<dbReference type="GO" id="GO:0015935">
    <property type="term" value="C:small ribosomal subunit"/>
    <property type="evidence" value="ECO:0007669"/>
    <property type="project" value="InterPro"/>
</dbReference>
<dbReference type="GO" id="GO:0019843">
    <property type="term" value="F:rRNA binding"/>
    <property type="evidence" value="ECO:0007669"/>
    <property type="project" value="UniProtKB-UniRule"/>
</dbReference>
<dbReference type="GO" id="GO:0003735">
    <property type="term" value="F:structural constituent of ribosome"/>
    <property type="evidence" value="ECO:0007669"/>
    <property type="project" value="InterPro"/>
</dbReference>
<dbReference type="GO" id="GO:0000049">
    <property type="term" value="F:tRNA binding"/>
    <property type="evidence" value="ECO:0007669"/>
    <property type="project" value="UniProtKB-UniRule"/>
</dbReference>
<dbReference type="GO" id="GO:0006412">
    <property type="term" value="P:translation"/>
    <property type="evidence" value="ECO:0007669"/>
    <property type="project" value="UniProtKB-UniRule"/>
</dbReference>
<dbReference type="CDD" id="cd14869">
    <property type="entry name" value="uS7_Bacteria"/>
    <property type="match status" value="1"/>
</dbReference>
<dbReference type="FunFam" id="1.10.455.10:FF:000001">
    <property type="entry name" value="30S ribosomal protein S7"/>
    <property type="match status" value="1"/>
</dbReference>
<dbReference type="Gene3D" id="1.10.455.10">
    <property type="entry name" value="Ribosomal protein S7 domain"/>
    <property type="match status" value="1"/>
</dbReference>
<dbReference type="HAMAP" id="MF_00480_B">
    <property type="entry name" value="Ribosomal_uS7_B"/>
    <property type="match status" value="1"/>
</dbReference>
<dbReference type="InterPro" id="IPR000235">
    <property type="entry name" value="Ribosomal_uS7"/>
</dbReference>
<dbReference type="InterPro" id="IPR005717">
    <property type="entry name" value="Ribosomal_uS7_bac/org-type"/>
</dbReference>
<dbReference type="InterPro" id="IPR020606">
    <property type="entry name" value="Ribosomal_uS7_CS"/>
</dbReference>
<dbReference type="InterPro" id="IPR023798">
    <property type="entry name" value="Ribosomal_uS7_dom"/>
</dbReference>
<dbReference type="InterPro" id="IPR036823">
    <property type="entry name" value="Ribosomal_uS7_dom_sf"/>
</dbReference>
<dbReference type="NCBIfam" id="TIGR01029">
    <property type="entry name" value="rpsG_bact"/>
    <property type="match status" value="1"/>
</dbReference>
<dbReference type="PANTHER" id="PTHR11205">
    <property type="entry name" value="RIBOSOMAL PROTEIN S7"/>
    <property type="match status" value="1"/>
</dbReference>
<dbReference type="Pfam" id="PF00177">
    <property type="entry name" value="Ribosomal_S7"/>
    <property type="match status" value="1"/>
</dbReference>
<dbReference type="PIRSF" id="PIRSF002122">
    <property type="entry name" value="RPS7p_RPS7a_RPS5e_RPS7o"/>
    <property type="match status" value="1"/>
</dbReference>
<dbReference type="SUPFAM" id="SSF47973">
    <property type="entry name" value="Ribosomal protein S7"/>
    <property type="match status" value="1"/>
</dbReference>
<dbReference type="PROSITE" id="PS00052">
    <property type="entry name" value="RIBOSOMAL_S7"/>
    <property type="match status" value="1"/>
</dbReference>
<organism>
    <name type="scientific">Klebsiella pneumoniae subsp. pneumoniae (strain ATCC 700721 / MGH 78578)</name>
    <dbReference type="NCBI Taxonomy" id="272620"/>
    <lineage>
        <taxon>Bacteria</taxon>
        <taxon>Pseudomonadati</taxon>
        <taxon>Pseudomonadota</taxon>
        <taxon>Gammaproteobacteria</taxon>
        <taxon>Enterobacterales</taxon>
        <taxon>Enterobacteriaceae</taxon>
        <taxon>Klebsiella/Raoultella group</taxon>
        <taxon>Klebsiella</taxon>
        <taxon>Klebsiella pneumoniae complex</taxon>
    </lineage>
</organism>
<comment type="function">
    <text evidence="1">One of the primary rRNA binding proteins, it binds directly to 16S rRNA where it nucleates assembly of the head domain of the 30S subunit. Is located at the subunit interface close to the decoding center, probably blocks exit of the E-site tRNA.</text>
</comment>
<comment type="subunit">
    <text evidence="1">Part of the 30S ribosomal subunit. Contacts proteins S9 and S11.</text>
</comment>
<comment type="similarity">
    <text evidence="1">Belongs to the universal ribosomal protein uS7 family.</text>
</comment>
<name>RS7_KLEP7</name>
<feature type="chain" id="PRO_1000014209" description="Small ribosomal subunit protein uS7">
    <location>
        <begin position="1"/>
        <end position="156"/>
    </location>
</feature>
<reference key="1">
    <citation type="submission" date="2006-09" db="EMBL/GenBank/DDBJ databases">
        <authorList>
            <consortium name="The Klebsiella pneumonia Genome Sequencing Project"/>
            <person name="McClelland M."/>
            <person name="Sanderson E.K."/>
            <person name="Spieth J."/>
            <person name="Clifton W.S."/>
            <person name="Latreille P."/>
            <person name="Sabo A."/>
            <person name="Pepin K."/>
            <person name="Bhonagiri V."/>
            <person name="Porwollik S."/>
            <person name="Ali J."/>
            <person name="Wilson R.K."/>
        </authorList>
    </citation>
    <scope>NUCLEOTIDE SEQUENCE [LARGE SCALE GENOMIC DNA]</scope>
    <source>
        <strain>ATCC 700721 / MGH 78578</strain>
    </source>
</reference>